<organism>
    <name type="scientific">Campylobacter jejuni (strain RM1221)</name>
    <dbReference type="NCBI Taxonomy" id="195099"/>
    <lineage>
        <taxon>Bacteria</taxon>
        <taxon>Pseudomonadati</taxon>
        <taxon>Campylobacterota</taxon>
        <taxon>Epsilonproteobacteria</taxon>
        <taxon>Campylobacterales</taxon>
        <taxon>Campylobacteraceae</taxon>
        <taxon>Campylobacter</taxon>
    </lineage>
</organism>
<gene>
    <name evidence="1" type="primary">gltX1</name>
    <name type="synonym">gltX-1</name>
    <name type="ordered locus">CJE0932</name>
</gene>
<keyword id="KW-0030">Aminoacyl-tRNA synthetase</keyword>
<keyword id="KW-0067">ATP-binding</keyword>
<keyword id="KW-0963">Cytoplasm</keyword>
<keyword id="KW-0436">Ligase</keyword>
<keyword id="KW-0547">Nucleotide-binding</keyword>
<keyword id="KW-0648">Protein biosynthesis</keyword>
<comment type="function">
    <text evidence="1">Catalyzes the attachment of glutamate to tRNA(Glu) in a two-step reaction: glutamate is first activated by ATP to form Glu-AMP and then transferred to the acceptor end of tRNA(Glu).</text>
</comment>
<comment type="catalytic activity">
    <reaction evidence="1">
        <text>tRNA(Glu) + L-glutamate + ATP = L-glutamyl-tRNA(Glu) + AMP + diphosphate</text>
        <dbReference type="Rhea" id="RHEA:23540"/>
        <dbReference type="Rhea" id="RHEA-COMP:9663"/>
        <dbReference type="Rhea" id="RHEA-COMP:9680"/>
        <dbReference type="ChEBI" id="CHEBI:29985"/>
        <dbReference type="ChEBI" id="CHEBI:30616"/>
        <dbReference type="ChEBI" id="CHEBI:33019"/>
        <dbReference type="ChEBI" id="CHEBI:78442"/>
        <dbReference type="ChEBI" id="CHEBI:78520"/>
        <dbReference type="ChEBI" id="CHEBI:456215"/>
        <dbReference type="EC" id="6.1.1.17"/>
    </reaction>
</comment>
<comment type="subunit">
    <text evidence="1">Monomer.</text>
</comment>
<comment type="subcellular location">
    <subcellularLocation>
        <location evidence="1">Cytoplasm</location>
    </subcellularLocation>
</comment>
<comment type="similarity">
    <text evidence="1">Belongs to the class-I aminoacyl-tRNA synthetase family. Glutamate--tRNA ligase type 1 subfamily.</text>
</comment>
<evidence type="ECO:0000255" key="1">
    <source>
        <dbReference type="HAMAP-Rule" id="MF_00022"/>
    </source>
</evidence>
<reference key="1">
    <citation type="journal article" date="2005" name="PLoS Biol.">
        <title>Major structural differences and novel potential virulence mechanisms from the genomes of multiple Campylobacter species.</title>
        <authorList>
            <person name="Fouts D.E."/>
            <person name="Mongodin E.F."/>
            <person name="Mandrell R.E."/>
            <person name="Miller W.G."/>
            <person name="Rasko D.A."/>
            <person name="Ravel J."/>
            <person name="Brinkac L.M."/>
            <person name="DeBoy R.T."/>
            <person name="Parker C.T."/>
            <person name="Daugherty S.C."/>
            <person name="Dodson R.J."/>
            <person name="Durkin A.S."/>
            <person name="Madupu R."/>
            <person name="Sullivan S.A."/>
            <person name="Shetty J.U."/>
            <person name="Ayodeji M.A."/>
            <person name="Shvartsbeyn A."/>
            <person name="Schatz M.C."/>
            <person name="Badger J.H."/>
            <person name="Fraser C.M."/>
            <person name="Nelson K.E."/>
        </authorList>
    </citation>
    <scope>NUCLEOTIDE SEQUENCE [LARGE SCALE GENOMIC DNA]</scope>
    <source>
        <strain>RM1221</strain>
    </source>
</reference>
<proteinExistence type="inferred from homology"/>
<sequence>MYRFAPSPTGDMHIGNLRAAIFNYICARQKNMDFILRIEDTDKARNIAGKEEEIKEILNLFSISWQHYYIQSENLKFHRQMALKLVSEKKAFACFCTEEELEAKKELAKKQGKAYRYDGTCEKLADIDVLECEKPFVIRLKKPTHTMKFTDFIKGELSFEPENIDSFVIMRTDKTPTYNFACAVDDMLENVTCIIRGEDHVSNTPKQEHIRASLGYNKAMTYAHLPIILNEEGVKMSKREAHSSVKWLLESGILPSAIANYLIMLGNKTPCEIFTLEKAIKWFDISKVSKAPARFDLKKLLQINREHIKMIKDDELNKILDLNKDLAPLAKFYTQEASTIKELKEKMQAIFNAKNFGEFETECKILKELLKDIELFENYEDFKNELLNKSNLKGKKFFMPLRIILTGNIHGPELSDLYPYIKNFIHELARI</sequence>
<protein>
    <recommendedName>
        <fullName evidence="1">Glutamate--tRNA ligase 1</fullName>
        <ecNumber evidence="1">6.1.1.17</ecNumber>
    </recommendedName>
    <alternativeName>
        <fullName evidence="1">Glutamyl-tRNA synthetase 1</fullName>
        <shortName evidence="1">GluRS 1</shortName>
    </alternativeName>
</protein>
<dbReference type="EC" id="6.1.1.17" evidence="1"/>
<dbReference type="EMBL" id="CP000025">
    <property type="protein sequence ID" value="AAW35269.1"/>
    <property type="molecule type" value="Genomic_DNA"/>
</dbReference>
<dbReference type="SMR" id="Q5HUV1"/>
<dbReference type="KEGG" id="cjr:CJE0932"/>
<dbReference type="HOGENOM" id="CLU_015768_6_0_7"/>
<dbReference type="GO" id="GO:0005829">
    <property type="term" value="C:cytosol"/>
    <property type="evidence" value="ECO:0007669"/>
    <property type="project" value="TreeGrafter"/>
</dbReference>
<dbReference type="GO" id="GO:0005524">
    <property type="term" value="F:ATP binding"/>
    <property type="evidence" value="ECO:0007669"/>
    <property type="project" value="UniProtKB-UniRule"/>
</dbReference>
<dbReference type="GO" id="GO:0004818">
    <property type="term" value="F:glutamate-tRNA ligase activity"/>
    <property type="evidence" value="ECO:0007669"/>
    <property type="project" value="UniProtKB-UniRule"/>
</dbReference>
<dbReference type="GO" id="GO:0000049">
    <property type="term" value="F:tRNA binding"/>
    <property type="evidence" value="ECO:0007669"/>
    <property type="project" value="InterPro"/>
</dbReference>
<dbReference type="GO" id="GO:0006424">
    <property type="term" value="P:glutamyl-tRNA aminoacylation"/>
    <property type="evidence" value="ECO:0007669"/>
    <property type="project" value="UniProtKB-UniRule"/>
</dbReference>
<dbReference type="Gene3D" id="1.10.10.350">
    <property type="match status" value="1"/>
</dbReference>
<dbReference type="Gene3D" id="3.40.50.620">
    <property type="entry name" value="HUPs"/>
    <property type="match status" value="1"/>
</dbReference>
<dbReference type="HAMAP" id="MF_00022">
    <property type="entry name" value="Glu_tRNA_synth_type1"/>
    <property type="match status" value="1"/>
</dbReference>
<dbReference type="InterPro" id="IPR045462">
    <property type="entry name" value="aa-tRNA-synth_I_cd-bd"/>
</dbReference>
<dbReference type="InterPro" id="IPR020751">
    <property type="entry name" value="aa-tRNA-synth_I_codon-bd_sub2"/>
</dbReference>
<dbReference type="InterPro" id="IPR001412">
    <property type="entry name" value="aa-tRNA-synth_I_CS"/>
</dbReference>
<dbReference type="InterPro" id="IPR008925">
    <property type="entry name" value="aa_tRNA-synth_I_cd-bd_sf"/>
</dbReference>
<dbReference type="InterPro" id="IPR004527">
    <property type="entry name" value="Glu-tRNA-ligase_bac/mito"/>
</dbReference>
<dbReference type="InterPro" id="IPR000924">
    <property type="entry name" value="Glu/Gln-tRNA-synth"/>
</dbReference>
<dbReference type="InterPro" id="IPR020058">
    <property type="entry name" value="Glu/Gln-tRNA-synth_Ib_cat-dom"/>
</dbReference>
<dbReference type="InterPro" id="IPR049940">
    <property type="entry name" value="GluQ/Sye"/>
</dbReference>
<dbReference type="InterPro" id="IPR014729">
    <property type="entry name" value="Rossmann-like_a/b/a_fold"/>
</dbReference>
<dbReference type="NCBIfam" id="TIGR00464">
    <property type="entry name" value="gltX_bact"/>
    <property type="match status" value="1"/>
</dbReference>
<dbReference type="PANTHER" id="PTHR43311">
    <property type="entry name" value="GLUTAMATE--TRNA LIGASE"/>
    <property type="match status" value="1"/>
</dbReference>
<dbReference type="PANTHER" id="PTHR43311:SF2">
    <property type="entry name" value="GLUTAMATE--TRNA LIGASE, MITOCHONDRIAL-RELATED"/>
    <property type="match status" value="1"/>
</dbReference>
<dbReference type="Pfam" id="PF19269">
    <property type="entry name" value="Anticodon_2"/>
    <property type="match status" value="1"/>
</dbReference>
<dbReference type="Pfam" id="PF00749">
    <property type="entry name" value="tRNA-synt_1c"/>
    <property type="match status" value="1"/>
</dbReference>
<dbReference type="PRINTS" id="PR00987">
    <property type="entry name" value="TRNASYNTHGLU"/>
</dbReference>
<dbReference type="SUPFAM" id="SSF48163">
    <property type="entry name" value="An anticodon-binding domain of class I aminoacyl-tRNA synthetases"/>
    <property type="match status" value="1"/>
</dbReference>
<dbReference type="SUPFAM" id="SSF52374">
    <property type="entry name" value="Nucleotidylyl transferase"/>
    <property type="match status" value="1"/>
</dbReference>
<dbReference type="PROSITE" id="PS00178">
    <property type="entry name" value="AA_TRNA_LIGASE_I"/>
    <property type="match status" value="1"/>
</dbReference>
<feature type="chain" id="PRO_0000119533" description="Glutamate--tRNA ligase 1">
    <location>
        <begin position="1"/>
        <end position="431"/>
    </location>
</feature>
<feature type="short sequence motif" description="'HIGH' region" evidence="1">
    <location>
        <begin position="6"/>
        <end position="16"/>
    </location>
</feature>
<feature type="short sequence motif" description="'KMSKS' region" evidence="1">
    <location>
        <begin position="235"/>
        <end position="239"/>
    </location>
</feature>
<feature type="binding site" evidence="1">
    <location>
        <position position="238"/>
    </location>
    <ligand>
        <name>ATP</name>
        <dbReference type="ChEBI" id="CHEBI:30616"/>
    </ligand>
</feature>
<name>SYE1_CAMJR</name>
<accession>Q5HUV1</accession>